<reference key="1">
    <citation type="journal article" date="2011" name="J. Bacteriol.">
        <title>Complete genome sequence and updated annotation of Desulfovibrio alaskensis G20.</title>
        <authorList>
            <person name="Hauser L.J."/>
            <person name="Land M.L."/>
            <person name="Brown S.D."/>
            <person name="Larimer F."/>
            <person name="Keller K.L."/>
            <person name="Rapp-Giles B.J."/>
            <person name="Price M.N."/>
            <person name="Lin M."/>
            <person name="Bruce D.C."/>
            <person name="Detter J.C."/>
            <person name="Tapia R."/>
            <person name="Han C.S."/>
            <person name="Goodwin L.A."/>
            <person name="Cheng J.F."/>
            <person name="Pitluck S."/>
            <person name="Copeland A."/>
            <person name="Lucas S."/>
            <person name="Nolan M."/>
            <person name="Lapidus A.L."/>
            <person name="Palumbo A.V."/>
            <person name="Wall J.D."/>
        </authorList>
    </citation>
    <scope>NUCLEOTIDE SEQUENCE [LARGE SCALE GENOMIC DNA]</scope>
    <source>
        <strain>ATCC BAA-1058 / DSM 17464 / G20</strain>
    </source>
</reference>
<comment type="function">
    <text evidence="1">Specifically methylates the N7 position of guanine in position 527 of 16S rRNA.</text>
</comment>
<comment type="catalytic activity">
    <reaction evidence="1">
        <text>guanosine(527) in 16S rRNA + S-adenosyl-L-methionine = N(7)-methylguanosine(527) in 16S rRNA + S-adenosyl-L-homocysteine</text>
        <dbReference type="Rhea" id="RHEA:42732"/>
        <dbReference type="Rhea" id="RHEA-COMP:10209"/>
        <dbReference type="Rhea" id="RHEA-COMP:10210"/>
        <dbReference type="ChEBI" id="CHEBI:57856"/>
        <dbReference type="ChEBI" id="CHEBI:59789"/>
        <dbReference type="ChEBI" id="CHEBI:74269"/>
        <dbReference type="ChEBI" id="CHEBI:74480"/>
        <dbReference type="EC" id="2.1.1.170"/>
    </reaction>
</comment>
<comment type="subcellular location">
    <subcellularLocation>
        <location evidence="1">Cytoplasm</location>
    </subcellularLocation>
</comment>
<comment type="similarity">
    <text evidence="1">Belongs to the methyltransferase superfamily. RNA methyltransferase RsmG family.</text>
</comment>
<evidence type="ECO:0000255" key="1">
    <source>
        <dbReference type="HAMAP-Rule" id="MF_00074"/>
    </source>
</evidence>
<dbReference type="EC" id="2.1.1.170" evidence="1"/>
<dbReference type="EMBL" id="CP000112">
    <property type="protein sequence ID" value="ABB39090.1"/>
    <property type="molecule type" value="Genomic_DNA"/>
</dbReference>
<dbReference type="RefSeq" id="WP_011368173.1">
    <property type="nucleotide sequence ID" value="NC_007519.1"/>
</dbReference>
<dbReference type="SMR" id="Q30Z06"/>
<dbReference type="STRING" id="207559.Dde_2293"/>
<dbReference type="KEGG" id="dde:Dde_2293"/>
<dbReference type="eggNOG" id="COG0357">
    <property type="taxonomic scope" value="Bacteria"/>
</dbReference>
<dbReference type="HOGENOM" id="CLU_065341_2_3_7"/>
<dbReference type="Proteomes" id="UP000002710">
    <property type="component" value="Chromosome"/>
</dbReference>
<dbReference type="GO" id="GO:0005829">
    <property type="term" value="C:cytosol"/>
    <property type="evidence" value="ECO:0007669"/>
    <property type="project" value="TreeGrafter"/>
</dbReference>
<dbReference type="GO" id="GO:0070043">
    <property type="term" value="F:rRNA (guanine-N7-)-methyltransferase activity"/>
    <property type="evidence" value="ECO:0007669"/>
    <property type="project" value="UniProtKB-UniRule"/>
</dbReference>
<dbReference type="Gene3D" id="3.40.50.150">
    <property type="entry name" value="Vaccinia Virus protein VP39"/>
    <property type="match status" value="1"/>
</dbReference>
<dbReference type="HAMAP" id="MF_00074">
    <property type="entry name" value="16SrRNA_methyltr_G"/>
    <property type="match status" value="1"/>
</dbReference>
<dbReference type="InterPro" id="IPR003682">
    <property type="entry name" value="rRNA_ssu_MeTfrase_G"/>
</dbReference>
<dbReference type="InterPro" id="IPR029063">
    <property type="entry name" value="SAM-dependent_MTases_sf"/>
</dbReference>
<dbReference type="PANTHER" id="PTHR31760">
    <property type="entry name" value="S-ADENOSYL-L-METHIONINE-DEPENDENT METHYLTRANSFERASES SUPERFAMILY PROTEIN"/>
    <property type="match status" value="1"/>
</dbReference>
<dbReference type="PANTHER" id="PTHR31760:SF0">
    <property type="entry name" value="S-ADENOSYL-L-METHIONINE-DEPENDENT METHYLTRANSFERASES SUPERFAMILY PROTEIN"/>
    <property type="match status" value="1"/>
</dbReference>
<dbReference type="Pfam" id="PF02527">
    <property type="entry name" value="GidB"/>
    <property type="match status" value="1"/>
</dbReference>
<dbReference type="SUPFAM" id="SSF53335">
    <property type="entry name" value="S-adenosyl-L-methionine-dependent methyltransferases"/>
    <property type="match status" value="1"/>
</dbReference>
<accession>Q30Z06</accession>
<proteinExistence type="inferred from homology"/>
<sequence>MARPAKPAEEPQVEALCCELGFRLPPAAVTGLTVYLNMLQKWSAVMNLVGPRTWQPMVRTLIVDSLHLDRFLRDAVPQCGPQIWDFGAGAGLPGIPLRMVWQHGEYHMVDVREKRTMFMQMVLARHPLSGTFVHRARVEDFMADRAPADMLVSRAFMPWPELLSLLEGRIRQGGHVIVLANEPAPDHDRPDAAHGRPLPSGWDLTAQYVYEVEGSARYFWALSSKKAPS</sequence>
<organism>
    <name type="scientific">Oleidesulfovibrio alaskensis (strain ATCC BAA-1058 / DSM 17464 / G20)</name>
    <name type="common">Desulfovibrio alaskensis</name>
    <dbReference type="NCBI Taxonomy" id="207559"/>
    <lineage>
        <taxon>Bacteria</taxon>
        <taxon>Pseudomonadati</taxon>
        <taxon>Thermodesulfobacteriota</taxon>
        <taxon>Desulfovibrionia</taxon>
        <taxon>Desulfovibrionales</taxon>
        <taxon>Desulfovibrionaceae</taxon>
        <taxon>Oleidesulfovibrio</taxon>
    </lineage>
</organism>
<protein>
    <recommendedName>
        <fullName evidence="1">Ribosomal RNA small subunit methyltransferase G</fullName>
        <ecNumber evidence="1">2.1.1.170</ecNumber>
    </recommendedName>
    <alternativeName>
        <fullName evidence="1">16S rRNA 7-methylguanosine methyltransferase</fullName>
        <shortName evidence="1">16S rRNA m7G methyltransferase</shortName>
    </alternativeName>
</protein>
<gene>
    <name evidence="1" type="primary">rsmG</name>
    <name type="ordered locus">Dde_2293</name>
</gene>
<feature type="chain" id="PRO_0000342912" description="Ribosomal RNA small subunit methyltransferase G">
    <location>
        <begin position="1"/>
        <end position="229"/>
    </location>
</feature>
<feature type="binding site" evidence="1">
    <location>
        <position position="87"/>
    </location>
    <ligand>
        <name>S-adenosyl-L-methionine</name>
        <dbReference type="ChEBI" id="CHEBI:59789"/>
    </ligand>
</feature>
<feature type="binding site" evidence="1">
    <location>
        <position position="92"/>
    </location>
    <ligand>
        <name>S-adenosyl-L-methionine</name>
        <dbReference type="ChEBI" id="CHEBI:59789"/>
    </ligand>
</feature>
<feature type="binding site" evidence="1">
    <location>
        <begin position="138"/>
        <end position="139"/>
    </location>
    <ligand>
        <name>S-adenosyl-L-methionine</name>
        <dbReference type="ChEBI" id="CHEBI:59789"/>
    </ligand>
</feature>
<feature type="binding site" evidence="1">
    <location>
        <position position="154"/>
    </location>
    <ligand>
        <name>S-adenosyl-L-methionine</name>
        <dbReference type="ChEBI" id="CHEBI:59789"/>
    </ligand>
</feature>
<name>RSMG_OLEA2</name>
<keyword id="KW-0963">Cytoplasm</keyword>
<keyword id="KW-0489">Methyltransferase</keyword>
<keyword id="KW-1185">Reference proteome</keyword>
<keyword id="KW-0698">rRNA processing</keyword>
<keyword id="KW-0949">S-adenosyl-L-methionine</keyword>
<keyword id="KW-0808">Transferase</keyword>